<reference key="1">
    <citation type="journal article" date="2005" name="Nucleic Acids Res.">
        <title>Genomic blueprint of Hahella chejuensis, a marine microbe producing an algicidal agent.</title>
        <authorList>
            <person name="Jeong H."/>
            <person name="Yim J.H."/>
            <person name="Lee C."/>
            <person name="Choi S.-H."/>
            <person name="Park Y.K."/>
            <person name="Yoon S.H."/>
            <person name="Hur C.-G."/>
            <person name="Kang H.-Y."/>
            <person name="Kim D."/>
            <person name="Lee H.H."/>
            <person name="Park K.H."/>
            <person name="Park S.-H."/>
            <person name="Park H.-S."/>
            <person name="Lee H.K."/>
            <person name="Oh T.K."/>
            <person name="Kim J.F."/>
        </authorList>
    </citation>
    <scope>NUCLEOTIDE SEQUENCE [LARGE SCALE GENOMIC DNA]</scope>
    <source>
        <strain>KCTC 2396</strain>
    </source>
</reference>
<proteinExistence type="inferred from homology"/>
<accession>Q2SF51</accession>
<keyword id="KW-0274">FAD</keyword>
<keyword id="KW-0285">Flavoprotein</keyword>
<keyword id="KW-0560">Oxidoreductase</keyword>
<keyword id="KW-1185">Reference proteome</keyword>
<keyword id="KW-0816">Tricarboxylic acid cycle</keyword>
<protein>
    <recommendedName>
        <fullName evidence="1">Probable malate:quinone oxidoreductase</fullName>
        <ecNumber evidence="1">1.1.5.4</ecNumber>
    </recommendedName>
    <alternativeName>
        <fullName evidence="1">MQO</fullName>
    </alternativeName>
    <alternativeName>
        <fullName evidence="1">Malate dehydrogenase [quinone]</fullName>
    </alternativeName>
</protein>
<comment type="catalytic activity">
    <reaction evidence="1">
        <text>(S)-malate + a quinone = a quinol + oxaloacetate</text>
        <dbReference type="Rhea" id="RHEA:46012"/>
        <dbReference type="ChEBI" id="CHEBI:15589"/>
        <dbReference type="ChEBI" id="CHEBI:16452"/>
        <dbReference type="ChEBI" id="CHEBI:24646"/>
        <dbReference type="ChEBI" id="CHEBI:132124"/>
        <dbReference type="EC" id="1.1.5.4"/>
    </reaction>
</comment>
<comment type="cofactor">
    <cofactor evidence="1">
        <name>FAD</name>
        <dbReference type="ChEBI" id="CHEBI:57692"/>
    </cofactor>
</comment>
<comment type="pathway">
    <text evidence="1">Carbohydrate metabolism; tricarboxylic acid cycle; oxaloacetate from (S)-malate (quinone route): step 1/1.</text>
</comment>
<comment type="similarity">
    <text evidence="1">Belongs to the MQO family.</text>
</comment>
<sequence>MTVKKADVLLVGGGVMSTTLGTMLMQLDPSLNIVMVERLDHVAHESTYGWNNAGTGHAGYCELNYTPETGDGDIEITRALAINASFEVSLQFWSYLVERGGLPSPDEFINTCPHESFVWGESDIAFLRKRHQLLSAHHLFKDMEFSDDPRTLQDWMPLVMEHRDPMQKVAATRVRYGSDVDFGSLTRNMVEHLQKNANFELLLSHPVKSLKQTSDGRWNVQLSDSRNGGSKTIDAGFVFLGAGGGALPLLQKSGIAEGDGYGGFPVSGQWLVCKKPDIVKRHYAKVYGKAAIGAPPMSVPHLDTRIINGEPALLFGPYAGFTTKFLKTGSSFDLFGSIRANNFGPIMSVGINNMDLTRYLIKEAMQSHSDRVKSLLNYFPEAKEDDWTLAEAGQRVQIIKRDAQGRGKLEFGTELVASKDGTLAALLGASPGASVAVKAMVDVIERCFKDRLSSADWTAKLKEMIPSYGESLVDNAELLHSVRSRTLSVLGLDKKRL</sequence>
<dbReference type="EC" id="1.1.5.4" evidence="1"/>
<dbReference type="EMBL" id="CP000155">
    <property type="protein sequence ID" value="ABC30723.1"/>
    <property type="molecule type" value="Genomic_DNA"/>
</dbReference>
<dbReference type="RefSeq" id="WP_011397790.1">
    <property type="nucleotide sequence ID" value="NC_007645.1"/>
</dbReference>
<dbReference type="SMR" id="Q2SF51"/>
<dbReference type="STRING" id="349521.HCH_04006"/>
<dbReference type="KEGG" id="hch:HCH_04006"/>
<dbReference type="eggNOG" id="COG0579">
    <property type="taxonomic scope" value="Bacteria"/>
</dbReference>
<dbReference type="HOGENOM" id="CLU_028151_0_0_6"/>
<dbReference type="OrthoDB" id="9763983at2"/>
<dbReference type="UniPathway" id="UPA00223">
    <property type="reaction ID" value="UER01008"/>
</dbReference>
<dbReference type="Proteomes" id="UP000000238">
    <property type="component" value="Chromosome"/>
</dbReference>
<dbReference type="GO" id="GO:0047545">
    <property type="term" value="F:2-hydroxyglutarate dehydrogenase activity"/>
    <property type="evidence" value="ECO:0007669"/>
    <property type="project" value="TreeGrafter"/>
</dbReference>
<dbReference type="GO" id="GO:0008924">
    <property type="term" value="F:L-malate dehydrogenase (quinone) activity"/>
    <property type="evidence" value="ECO:0007669"/>
    <property type="project" value="UniProtKB-UniRule"/>
</dbReference>
<dbReference type="GO" id="GO:0006099">
    <property type="term" value="P:tricarboxylic acid cycle"/>
    <property type="evidence" value="ECO:0007669"/>
    <property type="project" value="UniProtKB-UniRule"/>
</dbReference>
<dbReference type="Gene3D" id="3.30.9.10">
    <property type="entry name" value="D-Amino Acid Oxidase, subunit A, domain 2"/>
    <property type="match status" value="1"/>
</dbReference>
<dbReference type="Gene3D" id="3.50.50.60">
    <property type="entry name" value="FAD/NAD(P)-binding domain"/>
    <property type="match status" value="1"/>
</dbReference>
<dbReference type="HAMAP" id="MF_00212">
    <property type="entry name" value="MQO"/>
    <property type="match status" value="1"/>
</dbReference>
<dbReference type="InterPro" id="IPR036188">
    <property type="entry name" value="FAD/NAD-bd_sf"/>
</dbReference>
<dbReference type="InterPro" id="IPR006231">
    <property type="entry name" value="MQO"/>
</dbReference>
<dbReference type="NCBIfam" id="TIGR01320">
    <property type="entry name" value="mal_quin_oxido"/>
    <property type="match status" value="1"/>
</dbReference>
<dbReference type="NCBIfam" id="NF003603">
    <property type="entry name" value="PRK05257.1-1"/>
    <property type="match status" value="1"/>
</dbReference>
<dbReference type="NCBIfam" id="NF003605">
    <property type="entry name" value="PRK05257.1-4"/>
    <property type="match status" value="1"/>
</dbReference>
<dbReference type="NCBIfam" id="NF003606">
    <property type="entry name" value="PRK05257.2-1"/>
    <property type="match status" value="1"/>
</dbReference>
<dbReference type="NCBIfam" id="NF003608">
    <property type="entry name" value="PRK05257.2-4"/>
    <property type="match status" value="1"/>
</dbReference>
<dbReference type="NCBIfam" id="NF003611">
    <property type="entry name" value="PRK05257.3-2"/>
    <property type="match status" value="1"/>
</dbReference>
<dbReference type="NCBIfam" id="NF003613">
    <property type="entry name" value="PRK05257.3-4"/>
    <property type="match status" value="1"/>
</dbReference>
<dbReference type="NCBIfam" id="NF009875">
    <property type="entry name" value="PRK13339.1"/>
    <property type="match status" value="1"/>
</dbReference>
<dbReference type="PANTHER" id="PTHR43104">
    <property type="entry name" value="L-2-HYDROXYGLUTARATE DEHYDROGENASE, MITOCHONDRIAL"/>
    <property type="match status" value="1"/>
</dbReference>
<dbReference type="PANTHER" id="PTHR43104:SF2">
    <property type="entry name" value="L-2-HYDROXYGLUTARATE DEHYDROGENASE, MITOCHONDRIAL"/>
    <property type="match status" value="1"/>
</dbReference>
<dbReference type="Pfam" id="PF06039">
    <property type="entry name" value="Mqo"/>
    <property type="match status" value="1"/>
</dbReference>
<dbReference type="SUPFAM" id="SSF51905">
    <property type="entry name" value="FAD/NAD(P)-binding domain"/>
    <property type="match status" value="1"/>
</dbReference>
<evidence type="ECO:0000255" key="1">
    <source>
        <dbReference type="HAMAP-Rule" id="MF_00212"/>
    </source>
</evidence>
<name>MQO_HAHCH</name>
<gene>
    <name evidence="1" type="primary">mqo</name>
    <name type="ordered locus">HCH_04006</name>
</gene>
<organism>
    <name type="scientific">Hahella chejuensis (strain KCTC 2396)</name>
    <dbReference type="NCBI Taxonomy" id="349521"/>
    <lineage>
        <taxon>Bacteria</taxon>
        <taxon>Pseudomonadati</taxon>
        <taxon>Pseudomonadota</taxon>
        <taxon>Gammaproteobacteria</taxon>
        <taxon>Oceanospirillales</taxon>
        <taxon>Hahellaceae</taxon>
        <taxon>Hahella</taxon>
    </lineage>
</organism>
<feature type="chain" id="PRO_0000325498" description="Probable malate:quinone oxidoreductase">
    <location>
        <begin position="1"/>
        <end position="497"/>
    </location>
</feature>